<organism>
    <name type="scientific">Homo sapiens</name>
    <name type="common">Human</name>
    <dbReference type="NCBI Taxonomy" id="9606"/>
    <lineage>
        <taxon>Eukaryota</taxon>
        <taxon>Metazoa</taxon>
        <taxon>Chordata</taxon>
        <taxon>Craniata</taxon>
        <taxon>Vertebrata</taxon>
        <taxon>Euteleostomi</taxon>
        <taxon>Mammalia</taxon>
        <taxon>Eutheria</taxon>
        <taxon>Euarchontoglires</taxon>
        <taxon>Primates</taxon>
        <taxon>Haplorrhini</taxon>
        <taxon>Catarrhini</taxon>
        <taxon>Hominidae</taxon>
        <taxon>Homo</taxon>
    </lineage>
</organism>
<proteinExistence type="evidence at protein level"/>
<protein>
    <recommendedName>
        <fullName>Hemoglobin subunit epsilon</fullName>
    </recommendedName>
    <alternativeName>
        <fullName>Epsilon-globin</fullName>
    </alternativeName>
    <alternativeName>
        <fullName>Hemoglobin epsilon chain</fullName>
    </alternativeName>
</protein>
<dbReference type="EMBL" id="U01317">
    <property type="protein sequence ID" value="AAA16330.1"/>
    <property type="molecule type" value="Genomic_DNA"/>
</dbReference>
<dbReference type="EMBL" id="V00508">
    <property type="protein sequence ID" value="CAA23766.1"/>
    <property type="molecule type" value="Genomic_DNA"/>
</dbReference>
<dbReference type="EMBL" id="CR541912">
    <property type="protein sequence ID" value="CAG46710.1"/>
    <property type="molecule type" value="mRNA"/>
</dbReference>
<dbReference type="EMBL" id="CH471064">
    <property type="protein sequence ID" value="EAW68802.1"/>
    <property type="molecule type" value="Genomic_DNA"/>
</dbReference>
<dbReference type="EMBL" id="BC015537">
    <property type="protein sequence ID" value="AAH15537.1"/>
    <property type="molecule type" value="mRNA"/>
</dbReference>
<dbReference type="CCDS" id="CCDS7756.1"/>
<dbReference type="PIR" id="A90802">
    <property type="entry name" value="HEHU"/>
</dbReference>
<dbReference type="RefSeq" id="NP_005321.1">
    <property type="nucleotide sequence ID" value="NM_005330.4"/>
</dbReference>
<dbReference type="PDB" id="1A9W">
    <property type="method" value="X-ray"/>
    <property type="resolution" value="2.90 A"/>
    <property type="chains" value="E/F=2-147"/>
</dbReference>
<dbReference type="PDBsum" id="1A9W"/>
<dbReference type="SMR" id="P02100"/>
<dbReference type="BioGRID" id="109296">
    <property type="interactions" value="16"/>
</dbReference>
<dbReference type="ComplexPortal" id="CPX-2927">
    <property type="entry name" value="Hemoglobin E complex"/>
</dbReference>
<dbReference type="ComplexPortal" id="CPX-2928">
    <property type="entry name" value="Embryonic hemoglobin Gower-1 complex"/>
</dbReference>
<dbReference type="CORUM" id="P02100"/>
<dbReference type="FunCoup" id="P02100">
    <property type="interactions" value="18"/>
</dbReference>
<dbReference type="IntAct" id="P02100">
    <property type="interactions" value="12"/>
</dbReference>
<dbReference type="STRING" id="9606.ENSP00000292896"/>
<dbReference type="GlyGen" id="P02100">
    <property type="glycosylation" value="1 site, 1 O-linked glycan (1 site)"/>
</dbReference>
<dbReference type="iPTMnet" id="P02100"/>
<dbReference type="PhosphoSitePlus" id="P02100"/>
<dbReference type="BioMuta" id="HBE1"/>
<dbReference type="DMDM" id="122726"/>
<dbReference type="jPOST" id="P02100"/>
<dbReference type="MassIVE" id="P02100"/>
<dbReference type="PaxDb" id="9606-ENSP00000369586"/>
<dbReference type="PeptideAtlas" id="P02100"/>
<dbReference type="ProteomicsDB" id="51516"/>
<dbReference type="Pumba" id="P02100"/>
<dbReference type="Antibodypedia" id="42207">
    <property type="antibodies" value="181 antibodies from 25 providers"/>
</dbReference>
<dbReference type="DNASU" id="3046"/>
<dbReference type="Ensembl" id="ENST00000292896.3">
    <property type="protein sequence ID" value="ENSP00000292896.2"/>
    <property type="gene ID" value="ENSG00000213931.7"/>
</dbReference>
<dbReference type="Ensembl" id="ENST00000380237.5">
    <property type="protein sequence ID" value="ENSP00000369586.1"/>
    <property type="gene ID" value="ENSG00000213931.7"/>
</dbReference>
<dbReference type="Ensembl" id="ENST00000396895.3">
    <property type="protein sequence ID" value="ENSP00000380104.2"/>
    <property type="gene ID" value="ENSG00000213931.7"/>
</dbReference>
<dbReference type="GeneID" id="3046"/>
<dbReference type="KEGG" id="hsa:3046"/>
<dbReference type="MANE-Select" id="ENST00000396895.3">
    <property type="protein sequence ID" value="ENSP00000380104.2"/>
    <property type="RefSeq nucleotide sequence ID" value="NM_005330.4"/>
    <property type="RefSeq protein sequence ID" value="NP_005321.1"/>
</dbReference>
<dbReference type="UCSC" id="uc001mal.2">
    <property type="organism name" value="human"/>
</dbReference>
<dbReference type="AGR" id="HGNC:4830"/>
<dbReference type="CTD" id="3046"/>
<dbReference type="DisGeNET" id="3046"/>
<dbReference type="GeneCards" id="HBE1"/>
<dbReference type="HGNC" id="HGNC:4830">
    <property type="gene designation" value="HBE1"/>
</dbReference>
<dbReference type="HPA" id="ENSG00000213931">
    <property type="expression patterns" value="Low tissue specificity"/>
</dbReference>
<dbReference type="MIM" id="142100">
    <property type="type" value="gene"/>
</dbReference>
<dbReference type="neXtProt" id="NX_P02100"/>
<dbReference type="OpenTargets" id="ENSG00000213931"/>
<dbReference type="PharmGKB" id="PA29205"/>
<dbReference type="VEuPathDB" id="HostDB:ENSG00000213931"/>
<dbReference type="eggNOG" id="KOG3378">
    <property type="taxonomic scope" value="Eukaryota"/>
</dbReference>
<dbReference type="GeneTree" id="ENSGT00940000157809"/>
<dbReference type="HOGENOM" id="CLU_003827_10_0_1"/>
<dbReference type="InParanoid" id="P02100"/>
<dbReference type="OMA" id="ICGNPQV"/>
<dbReference type="OrthoDB" id="9886081at2759"/>
<dbReference type="PAN-GO" id="P02100">
    <property type="GO annotations" value="10 GO annotations based on evolutionary models"/>
</dbReference>
<dbReference type="PhylomeDB" id="P02100"/>
<dbReference type="TreeFam" id="TF333268"/>
<dbReference type="PathwayCommons" id="P02100"/>
<dbReference type="Reactome" id="R-HSA-983231">
    <property type="pathway name" value="Factors involved in megakaryocyte development and platelet production"/>
</dbReference>
<dbReference type="SignaLink" id="P02100"/>
<dbReference type="SIGNOR" id="P02100"/>
<dbReference type="BioGRID-ORCS" id="3046">
    <property type="hits" value="13 hits in 1152 CRISPR screens"/>
</dbReference>
<dbReference type="ChiTaRS" id="HBE1">
    <property type="organism name" value="human"/>
</dbReference>
<dbReference type="EvolutionaryTrace" id="P02100"/>
<dbReference type="GeneWiki" id="HBE1"/>
<dbReference type="GenomeRNAi" id="3046"/>
<dbReference type="Pharos" id="P02100">
    <property type="development level" value="Tbio"/>
</dbReference>
<dbReference type="PRO" id="PR:P02100"/>
<dbReference type="Proteomes" id="UP000005640">
    <property type="component" value="Chromosome 11"/>
</dbReference>
<dbReference type="RNAct" id="P02100">
    <property type="molecule type" value="protein"/>
</dbReference>
<dbReference type="Bgee" id="ENSG00000213931">
    <property type="expression patterns" value="Expressed in male germ line stem cell (sensu Vertebrata) in testis and 90 other cell types or tissues"/>
</dbReference>
<dbReference type="ExpressionAtlas" id="P02100">
    <property type="expression patterns" value="baseline and differential"/>
</dbReference>
<dbReference type="GO" id="GO:0072562">
    <property type="term" value="C:blood microparticle"/>
    <property type="evidence" value="ECO:0007005"/>
    <property type="project" value="UniProtKB"/>
</dbReference>
<dbReference type="GO" id="GO:0005829">
    <property type="term" value="C:cytosol"/>
    <property type="evidence" value="ECO:0000304"/>
    <property type="project" value="Reactome"/>
</dbReference>
<dbReference type="GO" id="GO:0031838">
    <property type="term" value="C:haptoglobin-hemoglobin complex"/>
    <property type="evidence" value="ECO:0000318"/>
    <property type="project" value="GO_Central"/>
</dbReference>
<dbReference type="GO" id="GO:0005833">
    <property type="term" value="C:hemoglobin complex"/>
    <property type="evidence" value="ECO:0000353"/>
    <property type="project" value="ComplexPortal"/>
</dbReference>
<dbReference type="GO" id="GO:0020037">
    <property type="term" value="F:heme binding"/>
    <property type="evidence" value="ECO:0000318"/>
    <property type="project" value="GO_Central"/>
</dbReference>
<dbReference type="GO" id="GO:0031721">
    <property type="term" value="F:hemoglobin alpha binding"/>
    <property type="evidence" value="ECO:0000318"/>
    <property type="project" value="GO_Central"/>
</dbReference>
<dbReference type="GO" id="GO:0046872">
    <property type="term" value="F:metal ion binding"/>
    <property type="evidence" value="ECO:0007669"/>
    <property type="project" value="UniProtKB-KW"/>
</dbReference>
<dbReference type="GO" id="GO:0019825">
    <property type="term" value="F:oxygen binding"/>
    <property type="evidence" value="ECO:0000318"/>
    <property type="project" value="GO_Central"/>
</dbReference>
<dbReference type="GO" id="GO:0005344">
    <property type="term" value="F:oxygen carrier activity"/>
    <property type="evidence" value="ECO:0000318"/>
    <property type="project" value="GO_Central"/>
</dbReference>
<dbReference type="GO" id="GO:0015670">
    <property type="term" value="P:carbon dioxide transport"/>
    <property type="evidence" value="ECO:0000303"/>
    <property type="project" value="ComplexPortal"/>
</dbReference>
<dbReference type="GO" id="GO:0098869">
    <property type="term" value="P:cellular oxidant detoxification"/>
    <property type="evidence" value="ECO:0007669"/>
    <property type="project" value="GOC"/>
</dbReference>
<dbReference type="GO" id="GO:0042744">
    <property type="term" value="P:hydrogen peroxide catabolic process"/>
    <property type="evidence" value="ECO:0000318"/>
    <property type="project" value="GO_Central"/>
</dbReference>
<dbReference type="GO" id="GO:0015671">
    <property type="term" value="P:oxygen transport"/>
    <property type="evidence" value="ECO:0000314"/>
    <property type="project" value="ComplexPortal"/>
</dbReference>
<dbReference type="CDD" id="cd08925">
    <property type="entry name" value="Hb-beta-like"/>
    <property type="match status" value="1"/>
</dbReference>
<dbReference type="FunFam" id="1.10.490.10:FF:000001">
    <property type="entry name" value="Hemoglobin subunit beta"/>
    <property type="match status" value="1"/>
</dbReference>
<dbReference type="Gene3D" id="1.10.490.10">
    <property type="entry name" value="Globins"/>
    <property type="match status" value="1"/>
</dbReference>
<dbReference type="InterPro" id="IPR000971">
    <property type="entry name" value="Globin"/>
</dbReference>
<dbReference type="InterPro" id="IPR009050">
    <property type="entry name" value="Globin-like_sf"/>
</dbReference>
<dbReference type="InterPro" id="IPR012292">
    <property type="entry name" value="Globin/Proto"/>
</dbReference>
<dbReference type="InterPro" id="IPR002337">
    <property type="entry name" value="Hemoglobin_b"/>
</dbReference>
<dbReference type="InterPro" id="IPR050056">
    <property type="entry name" value="Hemoglobin_oxygen_transport"/>
</dbReference>
<dbReference type="PANTHER" id="PTHR11442">
    <property type="entry name" value="HEMOGLOBIN FAMILY MEMBER"/>
    <property type="match status" value="1"/>
</dbReference>
<dbReference type="PANTHER" id="PTHR11442:SF7">
    <property type="entry name" value="HEMOGLOBIN SUBUNIT EPSILON"/>
    <property type="match status" value="1"/>
</dbReference>
<dbReference type="Pfam" id="PF00042">
    <property type="entry name" value="Globin"/>
    <property type="match status" value="1"/>
</dbReference>
<dbReference type="PRINTS" id="PR00814">
    <property type="entry name" value="BETAHAEM"/>
</dbReference>
<dbReference type="SUPFAM" id="SSF46458">
    <property type="entry name" value="Globin-like"/>
    <property type="match status" value="1"/>
</dbReference>
<dbReference type="PROSITE" id="PS01033">
    <property type="entry name" value="GLOBIN"/>
    <property type="match status" value="1"/>
</dbReference>
<keyword id="KW-0002">3D-structure</keyword>
<keyword id="KW-0903">Direct protein sequencing</keyword>
<keyword id="KW-0349">Heme</keyword>
<keyword id="KW-0408">Iron</keyword>
<keyword id="KW-0479">Metal-binding</keyword>
<keyword id="KW-0561">Oxygen transport</keyword>
<keyword id="KW-0597">Phosphoprotein</keyword>
<keyword id="KW-1267">Proteomics identification</keyword>
<keyword id="KW-1185">Reference proteome</keyword>
<keyword id="KW-0813">Transport</keyword>
<reference key="1">
    <citation type="journal article" date="1980" name="Cell">
        <title>The primary structure of the human epsilon-globin gene.</title>
        <authorList>
            <person name="Baralle F.E."/>
            <person name="Shoulders C.C."/>
            <person name="Proudfoot N.J."/>
        </authorList>
    </citation>
    <scope>NUCLEOTIDE SEQUENCE [GENOMIC DNA]</scope>
</reference>
<reference key="2">
    <citation type="submission" date="2004-06" db="EMBL/GenBank/DDBJ databases">
        <title>Cloning of human full open reading frames in Gateway(TM) system entry vector (pDONR201).</title>
        <authorList>
            <person name="Ebert L."/>
            <person name="Schick M."/>
            <person name="Neubert P."/>
            <person name="Schatten R."/>
            <person name="Henze S."/>
            <person name="Korn B."/>
        </authorList>
    </citation>
    <scope>NUCLEOTIDE SEQUENCE [LARGE SCALE MRNA]</scope>
</reference>
<reference key="3">
    <citation type="submission" date="2005-09" db="EMBL/GenBank/DDBJ databases">
        <authorList>
            <person name="Mural R.J."/>
            <person name="Istrail S."/>
            <person name="Sutton G.G."/>
            <person name="Florea L."/>
            <person name="Halpern A.L."/>
            <person name="Mobarry C.M."/>
            <person name="Lippert R."/>
            <person name="Walenz B."/>
            <person name="Shatkay H."/>
            <person name="Dew I."/>
            <person name="Miller J.R."/>
            <person name="Flanigan M.J."/>
            <person name="Edwards N.J."/>
            <person name="Bolanos R."/>
            <person name="Fasulo D."/>
            <person name="Halldorsson B.V."/>
            <person name="Hannenhalli S."/>
            <person name="Turner R."/>
            <person name="Yooseph S."/>
            <person name="Lu F."/>
            <person name="Nusskern D.R."/>
            <person name="Shue B.C."/>
            <person name="Zheng X.H."/>
            <person name="Zhong F."/>
            <person name="Delcher A.L."/>
            <person name="Huson D.H."/>
            <person name="Kravitz S.A."/>
            <person name="Mouchard L."/>
            <person name="Reinert K."/>
            <person name="Remington K.A."/>
            <person name="Clark A.G."/>
            <person name="Waterman M.S."/>
            <person name="Eichler E.E."/>
            <person name="Adams M.D."/>
            <person name="Hunkapiller M.W."/>
            <person name="Myers E.W."/>
            <person name="Venter J.C."/>
        </authorList>
    </citation>
    <scope>NUCLEOTIDE SEQUENCE [LARGE SCALE GENOMIC DNA]</scope>
</reference>
<reference key="4">
    <citation type="journal article" date="2004" name="Genome Res.">
        <title>The status, quality, and expansion of the NIH full-length cDNA project: the Mammalian Gene Collection (MGC).</title>
        <authorList>
            <consortium name="The MGC Project Team"/>
        </authorList>
    </citation>
    <scope>NUCLEOTIDE SEQUENCE [LARGE SCALE MRNA]</scope>
    <source>
        <tissue>Lung</tissue>
    </source>
</reference>
<reference key="5">
    <citation type="journal article" date="1980" name="Tex. Rep. Biol. Med.">
        <title>Embryonic hemoglobin: sequence of the epsilon and zeta chains.</title>
        <authorList>
            <person name="Clegg J.B."/>
        </authorList>
    </citation>
    <scope>PROTEIN SEQUENCE OF 2-147</scope>
</reference>
<reference key="6">
    <citation type="journal article" date="2011" name="BMC Syst. Biol.">
        <title>Initial characterization of the human central proteome.</title>
        <authorList>
            <person name="Burkard T.R."/>
            <person name="Planyavsky M."/>
            <person name="Kaupe I."/>
            <person name="Breitwieser F.P."/>
            <person name="Buerckstuemmer T."/>
            <person name="Bennett K.L."/>
            <person name="Superti-Furga G."/>
            <person name="Colinge J."/>
        </authorList>
    </citation>
    <scope>IDENTIFICATION BY MASS SPECTROMETRY [LARGE SCALE ANALYSIS]</scope>
</reference>
<reference key="7">
    <citation type="journal article" date="2013" name="J. Proteome Res.">
        <title>Toward a comprehensive characterization of a human cancer cell phosphoproteome.</title>
        <authorList>
            <person name="Zhou H."/>
            <person name="Di Palma S."/>
            <person name="Preisinger C."/>
            <person name="Peng M."/>
            <person name="Polat A.N."/>
            <person name="Heck A.J."/>
            <person name="Mohammed S."/>
        </authorList>
    </citation>
    <scope>PHOSPHORYLATION [LARGE SCALE ANALYSIS] AT SER-14 AND SER-51</scope>
    <scope>IDENTIFICATION BY MASS SPECTROMETRY [LARGE SCALE ANALYSIS]</scope>
    <source>
        <tissue>Erythroleukemia</tissue>
    </source>
</reference>
<reference key="8">
    <citation type="journal article" date="1998" name="J. Mol. Biol.">
        <title>Crystal structure of a human embryonic haemoglobin: the carbonmonoxy form of Gower II (alpha2 epsilon2) haemoglobin at 2.9-A resolution.</title>
        <authorList>
            <person name="Sutherland-Smith A.J."/>
            <person name="Baker H.M."/>
            <person name="Hofmann O.M."/>
            <person name="Brittain T."/>
            <person name="Baker E.N."/>
        </authorList>
    </citation>
    <scope>X-RAY CRYSTALLOGRAPHY (2.90 ANGSTROMS) OF HB GOWER-2 IN COMPLEX WITH HEME</scope>
    <scope>SUBUNIT</scope>
</reference>
<gene>
    <name type="primary">HBE1</name>
    <name type="synonym">HBE</name>
</gene>
<name>HBE_HUMAN</name>
<sequence length="147" mass="16203">MVHFTAEEKAAVTSLWSKMNVEEAGGEALGRLLVVYPWTQRFFDSFGNLSSPSAILGNPKVKAHGKKVLTSFGDAIKNMDNLKPAFAKLSELHCDKLHVDPENFKLLGNVMVIILATHFGKEFTPEVQAAWQKLVSAVAIALAHKYH</sequence>
<evidence type="ECO:0000250" key="1">
    <source>
        <dbReference type="UniProtKB" id="P80044"/>
    </source>
</evidence>
<evidence type="ECO:0000255" key="2">
    <source>
        <dbReference type="PROSITE-ProRule" id="PRU00238"/>
    </source>
</evidence>
<evidence type="ECO:0000269" key="3">
    <source>
    </source>
</evidence>
<evidence type="ECO:0000269" key="4">
    <source>
    </source>
</evidence>
<evidence type="ECO:0000305" key="5"/>
<evidence type="ECO:0007744" key="6">
    <source>
        <dbReference type="PDB" id="1A9W"/>
    </source>
</evidence>
<evidence type="ECO:0007744" key="7">
    <source>
    </source>
</evidence>
<evidence type="ECO:0007829" key="8">
    <source>
        <dbReference type="PDB" id="1A9W"/>
    </source>
</evidence>
<comment type="function">
    <text>The epsilon chain is a beta-type chain of early mammalian embryonic hemoglobin.</text>
</comment>
<comment type="subunit">
    <text evidence="4">Heterotetramer of two alpha chains and two epsilon chains in early embryonic hemoglobin Gower-2; two zeta chains and two epsilon chains in early embryonic hemoglobin Gower-1.</text>
</comment>
<comment type="interaction">
    <interactant intactId="EBI-6190240">
        <id>P02100</id>
    </interactant>
    <interactant intactId="EBI-714680">
        <id>P69905</id>
        <label>HBA2</label>
    </interactant>
    <organismsDiffer>false</organismsDiffer>
    <experiments>4</experiments>
</comment>
<comment type="interaction">
    <interactant intactId="EBI-6190240">
        <id>P02100</id>
    </interactant>
    <interactant intactId="EBI-10193656">
        <id>P09105</id>
        <label>HBQ1</label>
    </interactant>
    <organismsDiffer>false</organismsDiffer>
    <experiments>3</experiments>
</comment>
<comment type="interaction">
    <interactant intactId="EBI-6190240">
        <id>P02100</id>
    </interactant>
    <interactant intactId="EBI-719843">
        <id>P02008</id>
        <label>HBZ</label>
    </interactant>
    <organismsDiffer>false</organismsDiffer>
    <experiments>6</experiments>
</comment>
<comment type="interaction">
    <interactant intactId="EBI-6190240">
        <id>P02100</id>
    </interactant>
    <interactant intactId="EBI-948354">
        <id>Q6DKK2</id>
        <label>TTC19</label>
    </interactant>
    <organismsDiffer>false</organismsDiffer>
    <experiments>3</experiments>
</comment>
<comment type="tissue specificity">
    <text>Red blood cells.</text>
</comment>
<comment type="similarity">
    <text evidence="2">Belongs to the globin family.</text>
</comment>
<feature type="initiator methionine" description="Removed" evidence="3">
    <location>
        <position position="1"/>
    </location>
</feature>
<feature type="chain" id="PRO_0000053212" description="Hemoglobin subunit epsilon">
    <location>
        <begin position="2"/>
        <end position="147"/>
    </location>
</feature>
<feature type="domain" description="Globin" evidence="2">
    <location>
        <begin position="3"/>
        <end position="147"/>
    </location>
</feature>
<feature type="binding site" description="distal binding residue" evidence="1">
    <location>
        <position position="64"/>
    </location>
    <ligand>
        <name>heme b</name>
        <dbReference type="ChEBI" id="CHEBI:60344"/>
    </ligand>
    <ligandPart>
        <name>Fe</name>
        <dbReference type="ChEBI" id="CHEBI:18248"/>
    </ligandPart>
</feature>
<feature type="binding site" description="proximal binding residue" evidence="4 6">
    <location>
        <position position="93"/>
    </location>
    <ligand>
        <name>heme b</name>
        <dbReference type="ChEBI" id="CHEBI:60344"/>
    </ligand>
    <ligandPart>
        <name>Fe</name>
        <dbReference type="ChEBI" id="CHEBI:18248"/>
    </ligandPart>
</feature>
<feature type="modified residue" description="Phosphoserine" evidence="7">
    <location>
        <position position="14"/>
    </location>
</feature>
<feature type="modified residue" description="Phosphoserine" evidence="7">
    <location>
        <position position="51"/>
    </location>
</feature>
<feature type="sequence conflict" description="In Ref. 5; AA sequence." evidence="5" ref="5">
    <original>A</original>
    <variation>G</variation>
    <location>
        <position position="143"/>
    </location>
</feature>
<feature type="helix" evidence="8">
    <location>
        <begin position="6"/>
        <end position="18"/>
    </location>
</feature>
<feature type="turn" evidence="8">
    <location>
        <begin position="21"/>
        <end position="23"/>
    </location>
</feature>
<feature type="helix" evidence="8">
    <location>
        <begin position="24"/>
        <end position="35"/>
    </location>
</feature>
<feature type="helix" evidence="8">
    <location>
        <begin position="37"/>
        <end position="41"/>
    </location>
</feature>
<feature type="helix" evidence="8">
    <location>
        <begin position="44"/>
        <end position="46"/>
    </location>
</feature>
<feature type="helix" evidence="8">
    <location>
        <begin position="52"/>
        <end position="57"/>
    </location>
</feature>
<feature type="helix" evidence="8">
    <location>
        <begin position="59"/>
        <end position="76"/>
    </location>
</feature>
<feature type="strand" evidence="8">
    <location>
        <begin position="79"/>
        <end position="81"/>
    </location>
</feature>
<feature type="turn" evidence="8">
    <location>
        <begin position="83"/>
        <end position="86"/>
    </location>
</feature>
<feature type="helix" evidence="8">
    <location>
        <begin position="87"/>
        <end position="94"/>
    </location>
</feature>
<feature type="turn" evidence="8">
    <location>
        <begin position="95"/>
        <end position="97"/>
    </location>
</feature>
<feature type="helix" evidence="8">
    <location>
        <begin position="102"/>
        <end position="119"/>
    </location>
</feature>
<feature type="helix" evidence="8">
    <location>
        <begin position="120"/>
        <end position="122"/>
    </location>
</feature>
<feature type="helix" evidence="8">
    <location>
        <begin position="125"/>
        <end position="142"/>
    </location>
</feature>
<accession>P02100</accession>
<accession>Q6FH44</accession>